<sequence>MATGLIKAKEYDWKDSNLALFGSDTEKQVKKDSAATEPAWKGAGQKEGLKIWRIVNFKVTEWPQNQHGKFYNGDSYIILNTYKPDPKSNELAYDVHFWIGSQSSQDEYGTAAYKTVELDTFLDDKPVQHREVQGYESELFRNYFKQGLTILEGGAETGFHHVKPTEYKPRLLHFSGQKQQIYVHEVPLVKERLDHKDVFILDLGLTLYQWNGKESSKEEGFKAMQYLGLMRSERPKAEAETLEDESTPESHKFYTSLTGTDEPNLVKPLVKEENQLLKVSDAGGHLKTTEVKRGAVNSKDFSSNDVFILDTGDQCFVWVGKGRFAVGEAEWTRISHAHLMKTCHPLAPIHVIKEGQLCKAFNVAIAA</sequence>
<dbReference type="EMBL" id="D29920">
    <property type="protein sequence ID" value="BAA06219.2"/>
    <property type="molecule type" value="mRNA"/>
</dbReference>
<dbReference type="EMBL" id="Z32528">
    <property type="protein sequence ID" value="CAA83537.1"/>
    <property type="molecule type" value="mRNA"/>
</dbReference>
<dbReference type="EMBL" id="EU155485">
    <property type="protein sequence ID" value="ABV82435.1"/>
    <property type="molecule type" value="mRNA"/>
</dbReference>
<dbReference type="PIR" id="S51363">
    <property type="entry name" value="S51363"/>
</dbReference>
<dbReference type="SMR" id="Q7JQD3"/>
<dbReference type="GO" id="GO:0015629">
    <property type="term" value="C:actin cytoskeleton"/>
    <property type="evidence" value="ECO:0007669"/>
    <property type="project" value="TreeGrafter"/>
</dbReference>
<dbReference type="GO" id="GO:0005737">
    <property type="term" value="C:cytoplasm"/>
    <property type="evidence" value="ECO:0007669"/>
    <property type="project" value="UniProtKB-KW"/>
</dbReference>
<dbReference type="GO" id="GO:0003779">
    <property type="term" value="F:actin binding"/>
    <property type="evidence" value="ECO:0000314"/>
    <property type="project" value="UniProtKB"/>
</dbReference>
<dbReference type="GO" id="GO:0051015">
    <property type="term" value="F:actin filament binding"/>
    <property type="evidence" value="ECO:0007669"/>
    <property type="project" value="InterPro"/>
</dbReference>
<dbReference type="GO" id="GO:0005509">
    <property type="term" value="F:calcium ion binding"/>
    <property type="evidence" value="ECO:0000314"/>
    <property type="project" value="UniProtKB"/>
</dbReference>
<dbReference type="GO" id="GO:0051693">
    <property type="term" value="P:actin filament capping"/>
    <property type="evidence" value="ECO:0000314"/>
    <property type="project" value="UniProtKB"/>
</dbReference>
<dbReference type="GO" id="GO:0030043">
    <property type="term" value="P:actin filament fragmentation"/>
    <property type="evidence" value="ECO:0000314"/>
    <property type="project" value="UniProtKB"/>
</dbReference>
<dbReference type="GO" id="GO:0030041">
    <property type="term" value="P:actin filament polymerization"/>
    <property type="evidence" value="ECO:0000314"/>
    <property type="project" value="UniProtKB"/>
</dbReference>
<dbReference type="GO" id="GO:0051014">
    <property type="term" value="P:actin filament severing"/>
    <property type="evidence" value="ECO:0000314"/>
    <property type="project" value="UniProtKB"/>
</dbReference>
<dbReference type="GO" id="GO:0045010">
    <property type="term" value="P:actin nucleation"/>
    <property type="evidence" value="ECO:0000314"/>
    <property type="project" value="UniProtKB"/>
</dbReference>
<dbReference type="CDD" id="cd11290">
    <property type="entry name" value="gelsolin_S1_like"/>
    <property type="match status" value="1"/>
</dbReference>
<dbReference type="CDD" id="cd11289">
    <property type="entry name" value="gelsolin_S2_like"/>
    <property type="match status" value="1"/>
</dbReference>
<dbReference type="CDD" id="cd11292">
    <property type="entry name" value="gelsolin_S3_like"/>
    <property type="match status" value="1"/>
</dbReference>
<dbReference type="FunFam" id="3.40.20.10:FF:000043">
    <property type="entry name" value="macrophage-capping protein-like isoform X2"/>
    <property type="match status" value="1"/>
</dbReference>
<dbReference type="Gene3D" id="3.40.20.10">
    <property type="entry name" value="Severin"/>
    <property type="match status" value="3"/>
</dbReference>
<dbReference type="InterPro" id="IPR029006">
    <property type="entry name" value="ADF-H/Gelsolin-like_dom_sf"/>
</dbReference>
<dbReference type="InterPro" id="IPR007123">
    <property type="entry name" value="Gelsolin-like_dom"/>
</dbReference>
<dbReference type="InterPro" id="IPR036180">
    <property type="entry name" value="Gelsolin-like_dom_sf"/>
</dbReference>
<dbReference type="InterPro" id="IPR007122">
    <property type="entry name" value="Villin/Gelsolin"/>
</dbReference>
<dbReference type="PANTHER" id="PTHR11977:SF130">
    <property type="entry name" value="SEVERIN"/>
    <property type="match status" value="1"/>
</dbReference>
<dbReference type="PANTHER" id="PTHR11977">
    <property type="entry name" value="VILLIN"/>
    <property type="match status" value="1"/>
</dbReference>
<dbReference type="Pfam" id="PF00626">
    <property type="entry name" value="Gelsolin"/>
    <property type="match status" value="3"/>
</dbReference>
<dbReference type="PRINTS" id="PR00597">
    <property type="entry name" value="GELSOLIN"/>
</dbReference>
<dbReference type="SMART" id="SM00262">
    <property type="entry name" value="GEL"/>
    <property type="match status" value="3"/>
</dbReference>
<dbReference type="SUPFAM" id="SSF55753">
    <property type="entry name" value="Actin depolymerizing proteins"/>
    <property type="match status" value="2"/>
</dbReference>
<dbReference type="SUPFAM" id="SSF82754">
    <property type="entry name" value="C-terminal, gelsolin-like domain of Sec23/24"/>
    <property type="match status" value="1"/>
</dbReference>
<name>GELS1_LUMTE</name>
<keyword id="KW-0117">Actin capping</keyword>
<keyword id="KW-0009">Actin-binding</keyword>
<keyword id="KW-0106">Calcium</keyword>
<keyword id="KW-0963">Cytoplasm</keyword>
<keyword id="KW-0206">Cytoskeleton</keyword>
<keyword id="KW-0217">Developmental protein</keyword>
<keyword id="KW-0677">Repeat</keyword>
<gene>
    <name evidence="10" type="primary">AM</name>
</gene>
<proteinExistence type="evidence at protein level"/>
<feature type="chain" id="PRO_0000390385" description="Gelsolin-like protein 1">
    <location>
        <begin position="1"/>
        <end position="367"/>
    </location>
</feature>
<feature type="repeat" description="Gelsolin-like 1" evidence="2">
    <location>
        <begin position="56"/>
        <end position="141"/>
    </location>
</feature>
<feature type="repeat" description="Gelsolin-like 2" evidence="2">
    <location>
        <begin position="179"/>
        <end position="225"/>
    </location>
</feature>
<feature type="repeat" description="Gelsolin-like 3" evidence="2">
    <location>
        <begin position="287"/>
        <end position="322"/>
    </location>
</feature>
<feature type="region of interest" description="Actin binding" evidence="5 6">
    <location>
        <begin position="1"/>
        <end position="185"/>
    </location>
</feature>
<feature type="region of interest" description="Actin-actin interfilament contact point" evidence="1">
    <location>
        <begin position="106"/>
        <end position="109"/>
    </location>
</feature>
<feature type="region of interest" description="Actin binding, Actin-severing" evidence="6">
    <location>
        <begin position="186"/>
        <end position="295"/>
    </location>
</feature>
<feature type="region of interest" description="Disordered" evidence="3">
    <location>
        <begin position="235"/>
        <end position="257"/>
    </location>
</feature>
<feature type="region of interest" description="Actin-severing, Ca-sensitive" evidence="6">
    <location>
        <begin position="296"/>
        <end position="366"/>
    </location>
</feature>
<feature type="sequence conflict" description="In Ref. 1; CAA83537." evidence="11" ref="1">
    <original>KFYNG</original>
    <variation>SSTR</variation>
    <location>
        <begin position="69"/>
        <end position="73"/>
    </location>
</feature>
<comment type="function">
    <text evidence="4 6 7">Calcium-regulated protein that binds to the plus (or barbed) ends of actin monomers or filaments, preventing monomer exchange (end-blocking or capping). Can promote the assembly of monomers into filaments (nucleation) as well as sever existing filaments.</text>
</comment>
<comment type="subunit">
    <text evidence="6 7">Interacts with actin monomers and filaments.</text>
</comment>
<comment type="subcellular location">
    <subcellularLocation>
        <location evidence="1">Cytoplasm</location>
        <location evidence="1">Cytoskeleton</location>
    </subcellularLocation>
</comment>
<comment type="tissue specificity">
    <text evidence="4 8">Expressed in circular and longitudinal muscle, pseudohearts, pharynx and gizzard. Also expressed in male germ cells at the proximal pole of primary spermatocytes in 16 cell-stage morulae, and in the distal parts of the spermatocytes in 32 and 64 cell-stage morulae. In the spermatids of the 128 cell-stage morulae it is expressed at the proximal pole of the elongated nucleus and the distal pole near the base of the flagellae.</text>
</comment>
<comment type="developmental stage">
    <text evidence="4">Expressed in the cytophore, spermatocytes and young spermatids during spermatogenesis. Not expressed in mature sperm.</text>
</comment>
<comment type="similarity">
    <text evidence="2">Belongs to the villin/gelsolin family.</text>
</comment>
<organism>
    <name type="scientific">Lumbricus terrestris</name>
    <name type="common">Common earthworm</name>
    <dbReference type="NCBI Taxonomy" id="6398"/>
    <lineage>
        <taxon>Eukaryota</taxon>
        <taxon>Metazoa</taxon>
        <taxon>Spiralia</taxon>
        <taxon>Lophotrochozoa</taxon>
        <taxon>Annelida</taxon>
        <taxon>Clitellata</taxon>
        <taxon>Oligochaeta</taxon>
        <taxon>Crassiclitellata</taxon>
        <taxon>Lumbricina</taxon>
        <taxon>Lumbricidae</taxon>
        <taxon>Lumbricinae</taxon>
        <taxon>Lumbricus</taxon>
    </lineage>
</organism>
<evidence type="ECO:0000250" key="1">
    <source>
        <dbReference type="UniProtKB" id="P06396"/>
    </source>
</evidence>
<evidence type="ECO:0000255" key="2"/>
<evidence type="ECO:0000256" key="3">
    <source>
        <dbReference type="SAM" id="MobiDB-lite"/>
    </source>
</evidence>
<evidence type="ECO:0000269" key="4">
    <source>
    </source>
</evidence>
<evidence type="ECO:0000269" key="5">
    <source>
    </source>
</evidence>
<evidence type="ECO:0000269" key="6">
    <source>
    </source>
</evidence>
<evidence type="ECO:0000269" key="7">
    <source ref="3"/>
</evidence>
<evidence type="ECO:0000269" key="8">
    <source ref="5"/>
</evidence>
<evidence type="ECO:0000303" key="9">
    <source>
    </source>
</evidence>
<evidence type="ECO:0000303" key="10">
    <source>
    </source>
</evidence>
<evidence type="ECO:0000305" key="11"/>
<evidence type="ECO:0000312" key="12">
    <source>
        <dbReference type="EMBL" id="ABV82435.1"/>
    </source>
</evidence>
<evidence type="ECO:0000312" key="13">
    <source>
        <dbReference type="EMBL" id="BAA06219.2"/>
    </source>
</evidence>
<evidence type="ECO:0000312" key="14">
    <source>
        <dbReference type="EMBL" id="CAA83537.1"/>
    </source>
</evidence>
<accession>Q7JQD3</accession>
<accession>A8I4V6</accession>
<accession>Q25418</accession>
<accession>Q27410</accession>
<protein>
    <recommendedName>
        <fullName>Gelsolin-like protein 1</fullName>
    </recommendedName>
    <alternativeName>
        <fullName evidence="10 13">Actin-modulator</fullName>
        <shortName evidence="10">EWAM</shortName>
        <shortName evidence="9">EWAM-P1</shortName>
    </alternativeName>
</protein>
<reference evidence="13" key="1">
    <citation type="journal article" date="1994" name="Eur. J. Biochem.">
        <title>The complete sequence of a 40-kDa actin-modulating protein from the earthworm Lumbricus terrestris.</title>
        <authorList>
            <person name="Giebing T."/>
            <person name="D'Haese J."/>
            <person name="Hinssen H."/>
        </authorList>
    </citation>
    <scope>NUCLEOTIDE SEQUENCE [MRNA]</scope>
    <source>
        <tissue evidence="14">Muscle</tissue>
    </source>
</reference>
<reference evidence="11 12" key="2">
    <citation type="journal article" date="2008" name="Cell Tissue Res.">
        <title>Involvement of a gelsolin-related protein in spermatogenesis of the earthworm Lumbricus terrestris.</title>
        <authorList>
            <person name="Kruger E."/>
            <person name="Hinssen H."/>
            <person name="D'Haese J."/>
        </authorList>
    </citation>
    <scope>NUCLEOTIDE SEQUENCE [MRNA] OF 55-168</scope>
    <scope>FUNCTION</scope>
    <scope>TISSUE SPECIFICITY</scope>
    <scope>DEVELOPMENTAL STAGE</scope>
    <source>
        <tissue evidence="12">Seminal vesicle</tissue>
    </source>
</reference>
<reference evidence="11" key="3">
    <citation type="journal article" date="1987" name="J. Comp. Physiol. B">
        <title>Isolation and characterization of a Ca(2+)-activated actin-modulating protein from obliquely striated muscle.</title>
        <authorList>
            <person name="D'Haese J."/>
            <person name="Hinssen H."/>
        </authorList>
    </citation>
    <scope>FUNCTION</scope>
    <scope>INTERACTION WITH ACTIN</scope>
</reference>
<reference evidence="11" key="4">
    <citation type="journal article" date="1997" name="FEBS Lett.">
        <title>C-terminally deleted fragments of 40-kDa earthworm actin modulator still show gelsolin activities.</title>
        <authorList>
            <person name="Giebing T."/>
            <person name="Obermann W.M."/>
            <person name="Furst D."/>
            <person name="D'Haese J."/>
        </authorList>
    </citation>
    <scope>FUNCTION</scope>
    <scope>INTERACTION WITH ACTIN</scope>
</reference>
<reference evidence="11" key="5">
    <citation type="book" date="2001" name="Abstracts of the XXVI European Muscle Conference, J. Muscle Res. Cell Motil.">
        <title>Two distinct isoforms of the gelsolin-related protein of the annelid Lumbricus terrestris: characterization by sequence analysis and localization in various muscle tissues.</title>
        <authorList>
            <person name="Kruger E."/>
            <person name="Giebing T."/>
            <person name="Hinssen H."/>
            <person name="Fey M."/>
            <person name="D'Haese J."/>
        </authorList>
    </citation>
    <scope>TISSUE SPECIFICITY</scope>
</reference>